<name>MGDG3_ORYSJ</name>
<feature type="transit peptide" description="Chloroplast" evidence="2">
    <location>
        <begin position="1"/>
        <end position="60"/>
    </location>
</feature>
<feature type="chain" id="PRO_0000349430" description="Probable monogalactosyldiacylglycerol synthase 3, chloroplastic">
    <location>
        <begin position="61"/>
        <end position="508"/>
    </location>
</feature>
<feature type="region of interest" description="Disordered" evidence="3">
    <location>
        <begin position="51"/>
        <end position="79"/>
    </location>
</feature>
<reference key="1">
    <citation type="journal article" date="2005" name="Nature">
        <title>The map-based sequence of the rice genome.</title>
        <authorList>
            <consortium name="International rice genome sequencing project (IRGSP)"/>
        </authorList>
    </citation>
    <scope>NUCLEOTIDE SEQUENCE [LARGE SCALE GENOMIC DNA]</scope>
    <source>
        <strain>cv. Nipponbare</strain>
    </source>
</reference>
<reference key="2">
    <citation type="journal article" date="2008" name="Nucleic Acids Res.">
        <title>The rice annotation project database (RAP-DB): 2008 update.</title>
        <authorList>
            <consortium name="The rice annotation project (RAP)"/>
        </authorList>
    </citation>
    <scope>GENOME REANNOTATION</scope>
    <source>
        <strain>cv. Nipponbare</strain>
    </source>
</reference>
<reference key="3">
    <citation type="journal article" date="2013" name="Rice">
        <title>Improvement of the Oryza sativa Nipponbare reference genome using next generation sequence and optical map data.</title>
        <authorList>
            <person name="Kawahara Y."/>
            <person name="de la Bastide M."/>
            <person name="Hamilton J.P."/>
            <person name="Kanamori H."/>
            <person name="McCombie W.R."/>
            <person name="Ouyang S."/>
            <person name="Schwartz D.C."/>
            <person name="Tanaka T."/>
            <person name="Wu J."/>
            <person name="Zhou S."/>
            <person name="Childs K.L."/>
            <person name="Davidson R.M."/>
            <person name="Lin H."/>
            <person name="Quesada-Ocampo L."/>
            <person name="Vaillancourt B."/>
            <person name="Sakai H."/>
            <person name="Lee S.S."/>
            <person name="Kim J."/>
            <person name="Numa H."/>
            <person name="Itoh T."/>
            <person name="Buell C.R."/>
            <person name="Matsumoto T."/>
        </authorList>
    </citation>
    <scope>GENOME REANNOTATION</scope>
    <source>
        <strain>cv. Nipponbare</strain>
    </source>
</reference>
<reference key="4">
    <citation type="journal article" date="2005" name="PLoS Biol.">
        <title>The genomes of Oryza sativa: a history of duplications.</title>
        <authorList>
            <person name="Yu J."/>
            <person name="Wang J."/>
            <person name="Lin W."/>
            <person name="Li S."/>
            <person name="Li H."/>
            <person name="Zhou J."/>
            <person name="Ni P."/>
            <person name="Dong W."/>
            <person name="Hu S."/>
            <person name="Zeng C."/>
            <person name="Zhang J."/>
            <person name="Zhang Y."/>
            <person name="Li R."/>
            <person name="Xu Z."/>
            <person name="Li S."/>
            <person name="Li X."/>
            <person name="Zheng H."/>
            <person name="Cong L."/>
            <person name="Lin L."/>
            <person name="Yin J."/>
            <person name="Geng J."/>
            <person name="Li G."/>
            <person name="Shi J."/>
            <person name="Liu J."/>
            <person name="Lv H."/>
            <person name="Li J."/>
            <person name="Wang J."/>
            <person name="Deng Y."/>
            <person name="Ran L."/>
            <person name="Shi X."/>
            <person name="Wang X."/>
            <person name="Wu Q."/>
            <person name="Li C."/>
            <person name="Ren X."/>
            <person name="Wang J."/>
            <person name="Wang X."/>
            <person name="Li D."/>
            <person name="Liu D."/>
            <person name="Zhang X."/>
            <person name="Ji Z."/>
            <person name="Zhao W."/>
            <person name="Sun Y."/>
            <person name="Zhang Z."/>
            <person name="Bao J."/>
            <person name="Han Y."/>
            <person name="Dong L."/>
            <person name="Ji J."/>
            <person name="Chen P."/>
            <person name="Wu S."/>
            <person name="Liu J."/>
            <person name="Xiao Y."/>
            <person name="Bu D."/>
            <person name="Tan J."/>
            <person name="Yang L."/>
            <person name="Ye C."/>
            <person name="Zhang J."/>
            <person name="Xu J."/>
            <person name="Zhou Y."/>
            <person name="Yu Y."/>
            <person name="Zhang B."/>
            <person name="Zhuang S."/>
            <person name="Wei H."/>
            <person name="Liu B."/>
            <person name="Lei M."/>
            <person name="Yu H."/>
            <person name="Li Y."/>
            <person name="Xu H."/>
            <person name="Wei S."/>
            <person name="He X."/>
            <person name="Fang L."/>
            <person name="Zhang Z."/>
            <person name="Zhang Y."/>
            <person name="Huang X."/>
            <person name="Su Z."/>
            <person name="Tong W."/>
            <person name="Li J."/>
            <person name="Tong Z."/>
            <person name="Li S."/>
            <person name="Ye J."/>
            <person name="Wang L."/>
            <person name="Fang L."/>
            <person name="Lei T."/>
            <person name="Chen C.-S."/>
            <person name="Chen H.-C."/>
            <person name="Xu Z."/>
            <person name="Li H."/>
            <person name="Huang H."/>
            <person name="Zhang F."/>
            <person name="Xu H."/>
            <person name="Li N."/>
            <person name="Zhao C."/>
            <person name="Li S."/>
            <person name="Dong L."/>
            <person name="Huang Y."/>
            <person name="Li L."/>
            <person name="Xi Y."/>
            <person name="Qi Q."/>
            <person name="Li W."/>
            <person name="Zhang B."/>
            <person name="Hu W."/>
            <person name="Zhang Y."/>
            <person name="Tian X."/>
            <person name="Jiao Y."/>
            <person name="Liang X."/>
            <person name="Jin J."/>
            <person name="Gao L."/>
            <person name="Zheng W."/>
            <person name="Hao B."/>
            <person name="Liu S.-M."/>
            <person name="Wang W."/>
            <person name="Yuan L."/>
            <person name="Cao M."/>
            <person name="McDermott J."/>
            <person name="Samudrala R."/>
            <person name="Wang J."/>
            <person name="Wong G.K.-S."/>
            <person name="Yang H."/>
        </authorList>
    </citation>
    <scope>NUCLEOTIDE SEQUENCE [LARGE SCALE GENOMIC DNA]</scope>
    <source>
        <strain>cv. Nipponbare</strain>
    </source>
</reference>
<proteinExistence type="inferred from homology"/>
<accession>Q0DWQ1</accession>
<accession>A3ACD9</accession>
<accession>Q69SK2</accession>
<dbReference type="EC" id="2.4.1.46"/>
<dbReference type="EMBL" id="AP005056">
    <property type="protein sequence ID" value="BAD36030.1"/>
    <property type="status" value="ALT_SEQ"/>
    <property type="molecule type" value="Genomic_DNA"/>
</dbReference>
<dbReference type="EMBL" id="AP008208">
    <property type="protein sequence ID" value="BAF10337.1"/>
    <property type="status" value="ALT_SEQ"/>
    <property type="molecule type" value="Genomic_DNA"/>
</dbReference>
<dbReference type="EMBL" id="AP014958">
    <property type="status" value="NOT_ANNOTATED_CDS"/>
    <property type="molecule type" value="Genomic_DNA"/>
</dbReference>
<dbReference type="EMBL" id="CM000139">
    <property type="status" value="NOT_ANNOTATED_CDS"/>
    <property type="molecule type" value="Genomic_DNA"/>
</dbReference>
<dbReference type="SMR" id="Q0DWQ1"/>
<dbReference type="FunCoup" id="Q0DWQ1">
    <property type="interactions" value="1"/>
</dbReference>
<dbReference type="STRING" id="39947.Q0DWQ1"/>
<dbReference type="CAZy" id="GT28">
    <property type="family name" value="Glycosyltransferase Family 28"/>
</dbReference>
<dbReference type="PaxDb" id="39947-Q0DWQ1"/>
<dbReference type="KEGG" id="dosa:Os02g0802700"/>
<dbReference type="eggNOG" id="ENOG502QPXV">
    <property type="taxonomic scope" value="Eukaryota"/>
</dbReference>
<dbReference type="InParanoid" id="Q0DWQ1"/>
<dbReference type="BRENDA" id="2.4.1.46">
    <property type="organism ID" value="8948"/>
</dbReference>
<dbReference type="Proteomes" id="UP000000763">
    <property type="component" value="Chromosome 2"/>
</dbReference>
<dbReference type="Proteomes" id="UP000007752">
    <property type="component" value="Chromosome 2"/>
</dbReference>
<dbReference type="Proteomes" id="UP000059680">
    <property type="component" value="Chromosome 2"/>
</dbReference>
<dbReference type="GO" id="GO:0031969">
    <property type="term" value="C:chloroplast membrane"/>
    <property type="evidence" value="ECO:0007669"/>
    <property type="project" value="UniProtKB-SubCell"/>
</dbReference>
<dbReference type="GO" id="GO:0046509">
    <property type="term" value="F:1,2-diacylglycerol 3-beta-galactosyltransferase activity"/>
    <property type="evidence" value="ECO:0007669"/>
    <property type="project" value="UniProtKB-EC"/>
</dbReference>
<dbReference type="GO" id="GO:0009247">
    <property type="term" value="P:glycolipid biosynthetic process"/>
    <property type="evidence" value="ECO:0007669"/>
    <property type="project" value="InterPro"/>
</dbReference>
<dbReference type="CDD" id="cd17507">
    <property type="entry name" value="GT28_Beta-DGS-like"/>
    <property type="match status" value="1"/>
</dbReference>
<dbReference type="FunFam" id="3.40.50.2000:FF:000111">
    <property type="entry name" value="Monogalactosyldiacylglycerol synthase 3, chloroplastic"/>
    <property type="match status" value="1"/>
</dbReference>
<dbReference type="Gene3D" id="3.40.50.2000">
    <property type="entry name" value="Glycogen Phosphorylase B"/>
    <property type="match status" value="1"/>
</dbReference>
<dbReference type="InterPro" id="IPR009695">
    <property type="entry name" value="Diacylglyc_glucosyltr_N"/>
</dbReference>
<dbReference type="InterPro" id="IPR007235">
    <property type="entry name" value="Glyco_trans_28_C"/>
</dbReference>
<dbReference type="InterPro" id="IPR050519">
    <property type="entry name" value="Glycosyltransf_28_UgtP"/>
</dbReference>
<dbReference type="PANTHER" id="PTHR43025">
    <property type="entry name" value="MONOGALACTOSYLDIACYLGLYCEROL SYNTHASE"/>
    <property type="match status" value="1"/>
</dbReference>
<dbReference type="PANTHER" id="PTHR43025:SF1">
    <property type="entry name" value="MONOGALACTOSYLDIACYLGLYCEROL SYNTHASE 2, CHLOROPLASTIC"/>
    <property type="match status" value="1"/>
</dbReference>
<dbReference type="Pfam" id="PF04101">
    <property type="entry name" value="Glyco_tran_28_C"/>
    <property type="match status" value="1"/>
</dbReference>
<dbReference type="Pfam" id="PF06925">
    <property type="entry name" value="MGDG_synth"/>
    <property type="match status" value="1"/>
</dbReference>
<dbReference type="SUPFAM" id="SSF53756">
    <property type="entry name" value="UDP-Glycosyltransferase/glycogen phosphorylase"/>
    <property type="match status" value="1"/>
</dbReference>
<organism>
    <name type="scientific">Oryza sativa subsp. japonica</name>
    <name type="common">Rice</name>
    <dbReference type="NCBI Taxonomy" id="39947"/>
    <lineage>
        <taxon>Eukaryota</taxon>
        <taxon>Viridiplantae</taxon>
        <taxon>Streptophyta</taxon>
        <taxon>Embryophyta</taxon>
        <taxon>Tracheophyta</taxon>
        <taxon>Spermatophyta</taxon>
        <taxon>Magnoliopsida</taxon>
        <taxon>Liliopsida</taxon>
        <taxon>Poales</taxon>
        <taxon>Poaceae</taxon>
        <taxon>BOP clade</taxon>
        <taxon>Oryzoideae</taxon>
        <taxon>Oryzeae</taxon>
        <taxon>Oryzinae</taxon>
        <taxon>Oryza</taxon>
        <taxon>Oryza sativa</taxon>
    </lineage>
</organism>
<evidence type="ECO:0000250" key="1"/>
<evidence type="ECO:0000255" key="2"/>
<evidence type="ECO:0000256" key="3">
    <source>
        <dbReference type="SAM" id="MobiDB-lite"/>
    </source>
</evidence>
<evidence type="ECO:0000305" key="4"/>
<protein>
    <recommendedName>
        <fullName>Probable monogalactosyldiacylglycerol synthase 3, chloroplastic</fullName>
        <shortName>OsMGD3</shortName>
        <ecNumber>2.4.1.46</ecNumber>
    </recommendedName>
</protein>
<comment type="function">
    <text evidence="1">Involved in the synthesis of the major structural component of photosynthetic membranes.</text>
</comment>
<comment type="catalytic activity">
    <reaction>
        <text>a 1,2-diacyl-sn-glycerol + UDP-alpha-D-galactose = a 1,2-diacyl-3-O-(beta-D-galactosyl)-sn-glycerol + UDP + H(+)</text>
        <dbReference type="Rhea" id="RHEA:14945"/>
        <dbReference type="ChEBI" id="CHEBI:15378"/>
        <dbReference type="ChEBI" id="CHEBI:17615"/>
        <dbReference type="ChEBI" id="CHEBI:17815"/>
        <dbReference type="ChEBI" id="CHEBI:58223"/>
        <dbReference type="ChEBI" id="CHEBI:66914"/>
        <dbReference type="EC" id="2.4.1.46"/>
    </reaction>
</comment>
<comment type="subcellular location">
    <subcellularLocation>
        <location evidence="4">Plastid</location>
        <location evidence="4">Chloroplast membrane</location>
    </subcellularLocation>
</comment>
<comment type="similarity">
    <text evidence="4">Belongs to the glycosyltransferase 28 family.</text>
</comment>
<comment type="sequence caution" evidence="4">
    <conflict type="erroneous gene model prediction">
        <sequence resource="EMBL-CDS" id="BAD36030"/>
    </conflict>
</comment>
<comment type="sequence caution" evidence="4">
    <conflict type="erroneous gene model prediction">
        <sequence resource="EMBL-CDS" id="BAF10337"/>
    </conflict>
</comment>
<sequence length="508" mass="56243">MAASSSSSSSMASPRGRSIRETVLETVAAYHQQQRMRRKFRKSLSYAGELSSAGRARGEGGASSSASTTSLCGPDEDDEPFWEEEEGTVELVQLGANRAKNVLILMSDTGGGHRASAQAIKDPFRIEFGDDYRVFVKDLCKDHAGWPLNNMESSYKFMVKHVQLWKVAFHTTSPRWVHCFYLAALASFYAKKVEAGLKKYKPDIIISVHPLMQHIPLWVLKWQGLQNRVVFVTVITDLNTCHPTWFHADVNRCYCPSEEVAKRAALDDLQPSQIRVFGLPIRPSFCRAVLVKDDLRKELELDPELPAVLLMGGGEGMGPVKKTAKALGESLFDKELGKPIGQLIVICGRNKTLSSSLQALEWKIPIKVRGFETQMEKWMGACDCIITKAGPGTIAEALIRGLPIILNDFIPGQEVGNVPYVVDNGAGVFSKSSRETAKLVARWFGPDSDELKRMSEKALKLAQPEAVFDIVRDIHELSREQGVISQISSSLTSSFFIPSPETTPIQLM</sequence>
<keyword id="KW-0150">Chloroplast</keyword>
<keyword id="KW-0328">Glycosyltransferase</keyword>
<keyword id="KW-0472">Membrane</keyword>
<keyword id="KW-0934">Plastid</keyword>
<keyword id="KW-1185">Reference proteome</keyword>
<keyword id="KW-0808">Transferase</keyword>
<keyword id="KW-0809">Transit peptide</keyword>
<gene>
    <name type="primary">MGD3</name>
    <name type="ordered locus">Os02g0802700</name>
    <name type="ordered locus">LOC_Os02g55910</name>
    <name type="ORF">OsJ_008461</name>
    <name type="ORF">P0689B12.17</name>
</gene>